<organism>
    <name type="scientific">Brucella abortus biovar 1 (strain 9-941)</name>
    <dbReference type="NCBI Taxonomy" id="262698"/>
    <lineage>
        <taxon>Bacteria</taxon>
        <taxon>Pseudomonadati</taxon>
        <taxon>Pseudomonadota</taxon>
        <taxon>Alphaproteobacteria</taxon>
        <taxon>Hyphomicrobiales</taxon>
        <taxon>Brucellaceae</taxon>
        <taxon>Brucella/Ochrobactrum group</taxon>
        <taxon>Brucella</taxon>
    </lineage>
</organism>
<keyword id="KW-0456">Lyase</keyword>
<keyword id="KW-0501">Molybdenum cofactor biosynthesis</keyword>
<sequence>MSGKLTHIDQTGAANMVDVGSKDETERQAVAEGAVRMKPETLALILEGNAAKGDVIGTARLAGIMAAKRTSDLIPLCHPLMLTKVAVEIEPDENLPGLRVRALARLKGRTGVEMEALTAASVTCLTIYDMAKAVDRHMEIGSIRVIEKSGGKSGDWAVSDPALMR</sequence>
<reference key="1">
    <citation type="journal article" date="2005" name="J. Bacteriol.">
        <title>Completion of the genome sequence of Brucella abortus and comparison to the highly similar genomes of Brucella melitensis and Brucella suis.</title>
        <authorList>
            <person name="Halling S.M."/>
            <person name="Peterson-Burch B.D."/>
            <person name="Bricker B.J."/>
            <person name="Zuerner R.L."/>
            <person name="Qing Z."/>
            <person name="Li L.-L."/>
            <person name="Kapur V."/>
            <person name="Alt D.P."/>
            <person name="Olsen S.C."/>
        </authorList>
    </citation>
    <scope>NUCLEOTIDE SEQUENCE [LARGE SCALE GENOMIC DNA]</scope>
    <source>
        <strain>9-941</strain>
    </source>
</reference>
<comment type="function">
    <text evidence="1">Catalyzes the conversion of (8S)-3',8-cyclo-7,8-dihydroguanosine 5'-triphosphate to cyclic pyranopterin monophosphate (cPMP).</text>
</comment>
<comment type="catalytic activity">
    <reaction evidence="1">
        <text>(8S)-3',8-cyclo-7,8-dihydroguanosine 5'-triphosphate = cyclic pyranopterin phosphate + diphosphate</text>
        <dbReference type="Rhea" id="RHEA:49580"/>
        <dbReference type="ChEBI" id="CHEBI:33019"/>
        <dbReference type="ChEBI" id="CHEBI:59648"/>
        <dbReference type="ChEBI" id="CHEBI:131766"/>
        <dbReference type="EC" id="4.6.1.17"/>
    </reaction>
</comment>
<comment type="pathway">
    <text evidence="1">Cofactor biosynthesis; molybdopterin biosynthesis.</text>
</comment>
<comment type="subunit">
    <text evidence="1">Homohexamer; trimer of dimers.</text>
</comment>
<comment type="similarity">
    <text evidence="1">Belongs to the MoaC family.</text>
</comment>
<proteinExistence type="inferred from homology"/>
<dbReference type="EC" id="4.6.1.17" evidence="1"/>
<dbReference type="EMBL" id="AE017223">
    <property type="protein sequence ID" value="AAX74487.1"/>
    <property type="molecule type" value="Genomic_DNA"/>
</dbReference>
<dbReference type="RefSeq" id="WP_002964270.1">
    <property type="nucleotide sequence ID" value="NC_006932.1"/>
</dbReference>
<dbReference type="SMR" id="Q57CZ7"/>
<dbReference type="EnsemblBacteria" id="AAX74487">
    <property type="protein sequence ID" value="AAX74487"/>
    <property type="gene ID" value="BruAb1_1148"/>
</dbReference>
<dbReference type="GeneID" id="93016522"/>
<dbReference type="KEGG" id="bmb:BruAb1_1148"/>
<dbReference type="HOGENOM" id="CLU_074693_1_1_5"/>
<dbReference type="UniPathway" id="UPA00344"/>
<dbReference type="Proteomes" id="UP000000540">
    <property type="component" value="Chromosome I"/>
</dbReference>
<dbReference type="GO" id="GO:0061799">
    <property type="term" value="F:cyclic pyranopterin monophosphate synthase activity"/>
    <property type="evidence" value="ECO:0007669"/>
    <property type="project" value="UniProtKB-UniRule"/>
</dbReference>
<dbReference type="GO" id="GO:0006777">
    <property type="term" value="P:Mo-molybdopterin cofactor biosynthetic process"/>
    <property type="evidence" value="ECO:0007669"/>
    <property type="project" value="UniProtKB-UniRule"/>
</dbReference>
<dbReference type="CDD" id="cd01420">
    <property type="entry name" value="MoaC_PE"/>
    <property type="match status" value="1"/>
</dbReference>
<dbReference type="Gene3D" id="3.30.70.640">
    <property type="entry name" value="Molybdopterin cofactor biosynthesis C (MoaC) domain"/>
    <property type="match status" value="1"/>
</dbReference>
<dbReference type="HAMAP" id="MF_01224_B">
    <property type="entry name" value="MoaC_B"/>
    <property type="match status" value="1"/>
</dbReference>
<dbReference type="InterPro" id="IPR023045">
    <property type="entry name" value="MoaC"/>
</dbReference>
<dbReference type="InterPro" id="IPR047594">
    <property type="entry name" value="MoaC_bact/euk"/>
</dbReference>
<dbReference type="InterPro" id="IPR036522">
    <property type="entry name" value="MoaC_sf"/>
</dbReference>
<dbReference type="InterPro" id="IPR050105">
    <property type="entry name" value="MoCo_biosynth_MoaA/MoaC"/>
</dbReference>
<dbReference type="InterPro" id="IPR002820">
    <property type="entry name" value="Mopterin_CF_biosynth-C_dom"/>
</dbReference>
<dbReference type="NCBIfam" id="TIGR00581">
    <property type="entry name" value="moaC"/>
    <property type="match status" value="1"/>
</dbReference>
<dbReference type="NCBIfam" id="NF006870">
    <property type="entry name" value="PRK09364.1"/>
    <property type="match status" value="1"/>
</dbReference>
<dbReference type="PANTHER" id="PTHR22960">
    <property type="entry name" value="MOLYBDOPTERIN COFACTOR SYNTHESIS PROTEIN A"/>
    <property type="match status" value="1"/>
</dbReference>
<dbReference type="Pfam" id="PF01967">
    <property type="entry name" value="MoaC"/>
    <property type="match status" value="1"/>
</dbReference>
<dbReference type="SUPFAM" id="SSF55040">
    <property type="entry name" value="Molybdenum cofactor biosynthesis protein C, MoaC"/>
    <property type="match status" value="1"/>
</dbReference>
<feature type="chain" id="PRO_1000054073" description="Cyclic pyranopterin monophosphate synthase">
    <location>
        <begin position="1"/>
        <end position="165"/>
    </location>
</feature>
<feature type="active site" evidence="1">
    <location>
        <position position="129"/>
    </location>
</feature>
<feature type="binding site" evidence="1">
    <location>
        <begin position="76"/>
        <end position="78"/>
    </location>
    <ligand>
        <name>substrate</name>
    </ligand>
</feature>
<feature type="binding site" evidence="1">
    <location>
        <begin position="114"/>
        <end position="115"/>
    </location>
    <ligand>
        <name>substrate</name>
    </ligand>
</feature>
<protein>
    <recommendedName>
        <fullName evidence="1">Cyclic pyranopterin monophosphate synthase</fullName>
        <ecNumber evidence="1">4.6.1.17</ecNumber>
    </recommendedName>
    <alternativeName>
        <fullName evidence="1">Molybdenum cofactor biosynthesis protein C</fullName>
    </alternativeName>
</protein>
<accession>Q57CZ7</accession>
<gene>
    <name evidence="1" type="primary">moaC</name>
    <name type="ordered locus">BruAb1_1148</name>
</gene>
<name>MOAC_BRUAB</name>
<evidence type="ECO:0000255" key="1">
    <source>
        <dbReference type="HAMAP-Rule" id="MF_01224"/>
    </source>
</evidence>